<accession>Q921Q3</accession>
<accession>Q3UKT8</accession>
<comment type="function">
    <text evidence="2">Mannosyltransferase that operates in the biosynthetic pathway of dolichol-linked oligosaccharides, the glycan precursors employed in protein asparagine (N)-glycosylation. The assembly of dolichol-linked oligosaccharides begins on the cytosolic side of the endoplasmic reticulum membrane and finishes in its lumen. The sequential addition of sugars to dolichol pyrophosphate produces dolichol-linked oligosaccharides containing fourteen sugars, including two GlcNAcs, nine mannoses and three glucoses. Once assembled, the oligosaccharide is transferred from the lipid to nascent proteins by oligosaccharyltransferases. Catalyzes, on the cytoplasmic face of the endoplasmic reticulum, the addition of the first mannose residues to the dolichol-linked oligosaccharide chain, to produce Man1GlcNAc(2)-PP-dolichol core oligosaccharide. Man1GlcNAc(2)-PP-dolichol is a substrate for ALG2, the following enzyme in the biosynthetic pathway.</text>
</comment>
<comment type="catalytic activity">
    <reaction evidence="2">
        <text>an N,N'-diacetylchitobiosyl-diphospho-di-trans,poly-cis-dolichol + GDP-alpha-D-mannose = a beta-D-Man-(1-&gt;4)-beta-D-GlcNAc-(1-&gt;4)-alpha-D-GlcNAc-diphospho-di-trans,poly-cis-dolichol + GDP + H(+)</text>
        <dbReference type="Rhea" id="RHEA:13865"/>
        <dbReference type="Rhea" id="RHEA-COMP:19510"/>
        <dbReference type="Rhea" id="RHEA-COMP:19511"/>
        <dbReference type="ChEBI" id="CHEBI:15378"/>
        <dbReference type="ChEBI" id="CHEBI:57269"/>
        <dbReference type="ChEBI" id="CHEBI:57527"/>
        <dbReference type="ChEBI" id="CHEBI:58189"/>
        <dbReference type="ChEBI" id="CHEBI:58472"/>
        <dbReference type="EC" id="2.4.1.142"/>
    </reaction>
    <physiologicalReaction direction="left-to-right" evidence="2">
        <dbReference type="Rhea" id="RHEA:13866"/>
    </physiologicalReaction>
</comment>
<comment type="pathway">
    <text evidence="2">Protein modification; protein glycosylation.</text>
</comment>
<comment type="subcellular location">
    <subcellularLocation>
        <location evidence="1">Endoplasmic reticulum membrane</location>
        <topology evidence="1">Single-pass membrane protein</topology>
    </subcellularLocation>
</comment>
<comment type="alternative products">
    <event type="alternative splicing"/>
    <isoform>
        <id>Q921Q3-1</id>
        <name>1</name>
        <sequence type="displayed"/>
    </isoform>
    <isoform>
        <id>Q921Q3-2</id>
        <name>2</name>
        <sequence type="described" ref="VSP_032516"/>
    </isoform>
</comment>
<comment type="similarity">
    <text evidence="5">Belongs to the glycosyltransferase group 1 family. Glycosyltransferase 33 subfamily.</text>
</comment>
<comment type="sequence caution" evidence="5">
    <conflict type="frameshift">
        <sequence resource="EMBL" id="BC011281"/>
    </conflict>
</comment>
<organism>
    <name type="scientific">Mus musculus</name>
    <name type="common">Mouse</name>
    <dbReference type="NCBI Taxonomy" id="10090"/>
    <lineage>
        <taxon>Eukaryota</taxon>
        <taxon>Metazoa</taxon>
        <taxon>Chordata</taxon>
        <taxon>Craniata</taxon>
        <taxon>Vertebrata</taxon>
        <taxon>Euteleostomi</taxon>
        <taxon>Mammalia</taxon>
        <taxon>Eutheria</taxon>
        <taxon>Euarchontoglires</taxon>
        <taxon>Glires</taxon>
        <taxon>Rodentia</taxon>
        <taxon>Myomorpha</taxon>
        <taxon>Muroidea</taxon>
        <taxon>Muridae</taxon>
        <taxon>Murinae</taxon>
        <taxon>Mus</taxon>
        <taxon>Mus</taxon>
    </lineage>
</organism>
<keyword id="KW-0025">Alternative splicing</keyword>
<keyword id="KW-0256">Endoplasmic reticulum</keyword>
<keyword id="KW-0328">Glycosyltransferase</keyword>
<keyword id="KW-0472">Membrane</keyword>
<keyword id="KW-0597">Phosphoprotein</keyword>
<keyword id="KW-1185">Reference proteome</keyword>
<keyword id="KW-0735">Signal-anchor</keyword>
<keyword id="KW-0808">Transferase</keyword>
<keyword id="KW-0812">Transmembrane</keyword>
<keyword id="KW-1133">Transmembrane helix</keyword>
<sequence length="482" mass="54417">MAASCVALLVLALLLLVLLLGLWKRGRQTGRARHMVVVVLGDVGRSPRMQYHALSLAQSGFSVTLLGFYNSKPRDELLQNDRIRIVKLTDLRGLGAGPRILQYGVKVVFQAVYLLWKMMRMDPAAYIFLQNPPGLPAIAVCWFVGCICGSKLVIDWHNYGYSIMGLVHGPRHPIVLLAKWYEKFFGRLSHLNLCVTNAMREDLAENWCVRAVTLYDKPASFFKETPLDLQHELFMKLSHTYSPFQSCSDPSHPDTERSAFTERDCQSGVVRRLHGRPALLVSSTSWTEDEDFSILLRALEKFEQQALTGDSLPSLVCVITGKGPLREHYRHLISQKHLQHVRFCTPWLEAEDYPLLLGSADLGVCLHMSSSGLDLPMKVVDMFGCHLPVCAVNFKCLHELVRHGENGLVFKDAEELAAQLQMLFSKFPDPAGKLSQFRKKLQESGQQRWDESWQHTVLPLLAHSQMTPRPHPPCGHPSCRGF</sequence>
<dbReference type="EC" id="2.4.1.142" evidence="2"/>
<dbReference type="EMBL" id="AK145871">
    <property type="protein sequence ID" value="BAE26713.1"/>
    <property type="molecule type" value="mRNA"/>
</dbReference>
<dbReference type="EMBL" id="BC011281">
    <property type="status" value="NOT_ANNOTATED_CDS"/>
    <property type="molecule type" value="mRNA"/>
</dbReference>
<dbReference type="CCDS" id="CCDS49753.1">
    <molecule id="Q921Q3-1"/>
</dbReference>
<dbReference type="RefSeq" id="NP_663337.2">
    <molecule id="Q921Q3-1"/>
    <property type="nucleotide sequence ID" value="NM_145362.2"/>
</dbReference>
<dbReference type="SMR" id="Q921Q3"/>
<dbReference type="BioGRID" id="228964">
    <property type="interactions" value="4"/>
</dbReference>
<dbReference type="FunCoup" id="Q921Q3">
    <property type="interactions" value="2816"/>
</dbReference>
<dbReference type="STRING" id="10090.ENSMUSP00000097770"/>
<dbReference type="CAZy" id="GT33">
    <property type="family name" value="Glycosyltransferase Family 33"/>
</dbReference>
<dbReference type="iPTMnet" id="Q921Q3"/>
<dbReference type="PhosphoSitePlus" id="Q921Q3"/>
<dbReference type="SwissPalm" id="Q921Q3"/>
<dbReference type="PaxDb" id="10090-ENSMUSP00000097770"/>
<dbReference type="PeptideAtlas" id="Q921Q3"/>
<dbReference type="ProteomicsDB" id="296221">
    <molecule id="Q921Q3-1"/>
</dbReference>
<dbReference type="ProteomicsDB" id="296222">
    <molecule id="Q921Q3-2"/>
</dbReference>
<dbReference type="Pumba" id="Q921Q3"/>
<dbReference type="DNASU" id="208211"/>
<dbReference type="Ensembl" id="ENSMUST00000049207.9">
    <molecule id="Q921Q3-2"/>
    <property type="protein sequence ID" value="ENSMUSP00000046534.9"/>
    <property type="gene ID" value="ENSMUSG00000039427.15"/>
</dbReference>
<dbReference type="Ensembl" id="ENSMUST00000100196.9">
    <molecule id="Q921Q3-1"/>
    <property type="protein sequence ID" value="ENSMUSP00000097770.3"/>
    <property type="gene ID" value="ENSMUSG00000039427.15"/>
</dbReference>
<dbReference type="GeneID" id="208211"/>
<dbReference type="KEGG" id="mmu:208211"/>
<dbReference type="UCSC" id="uc007yby.2">
    <molecule id="Q921Q3-1"/>
    <property type="organism name" value="mouse"/>
</dbReference>
<dbReference type="UCSC" id="uc012aba.2">
    <molecule id="Q921Q3-2"/>
    <property type="organism name" value="mouse"/>
</dbReference>
<dbReference type="AGR" id="MGI:2384774"/>
<dbReference type="CTD" id="56052"/>
<dbReference type="MGI" id="MGI:2384774">
    <property type="gene designation" value="Alg1"/>
</dbReference>
<dbReference type="VEuPathDB" id="HostDB:ENSMUSG00000039427"/>
<dbReference type="eggNOG" id="KOG2941">
    <property type="taxonomic scope" value="Eukaryota"/>
</dbReference>
<dbReference type="GeneTree" id="ENSGT00390000008647"/>
<dbReference type="HOGENOM" id="CLU_012079_0_0_1"/>
<dbReference type="InParanoid" id="Q921Q3"/>
<dbReference type="OMA" id="CKLIIDW"/>
<dbReference type="OrthoDB" id="614844at2759"/>
<dbReference type="PhylomeDB" id="Q921Q3"/>
<dbReference type="TreeFam" id="TF314121"/>
<dbReference type="Reactome" id="R-MMU-446193">
    <property type="pathway name" value="Biosynthesis of the N-glycan precursor (dolichol lipid-linked oligosaccharide, LLO) and transfer to a nascent protein"/>
</dbReference>
<dbReference type="UniPathway" id="UPA00378"/>
<dbReference type="BioGRID-ORCS" id="208211">
    <property type="hits" value="29 hits in 81 CRISPR screens"/>
</dbReference>
<dbReference type="ChiTaRS" id="Alg1">
    <property type="organism name" value="mouse"/>
</dbReference>
<dbReference type="PRO" id="PR:Q921Q3"/>
<dbReference type="Proteomes" id="UP000000589">
    <property type="component" value="Chromosome 16"/>
</dbReference>
<dbReference type="RNAct" id="Q921Q3">
    <property type="molecule type" value="protein"/>
</dbReference>
<dbReference type="Bgee" id="ENSMUSG00000039427">
    <property type="expression patterns" value="Expressed in right kidney and 243 other cell types or tissues"/>
</dbReference>
<dbReference type="GO" id="GO:0098554">
    <property type="term" value="C:cytoplasmic side of endoplasmic reticulum membrane"/>
    <property type="evidence" value="ECO:0000250"/>
    <property type="project" value="UniProtKB"/>
</dbReference>
<dbReference type="GO" id="GO:0004578">
    <property type="term" value="F:chitobiosyldiphosphodolichol beta-mannosyltransferase activity"/>
    <property type="evidence" value="ECO:0000250"/>
    <property type="project" value="UniProtKB"/>
</dbReference>
<dbReference type="GO" id="GO:0006488">
    <property type="term" value="P:dolichol-linked oligosaccharide biosynthetic process"/>
    <property type="evidence" value="ECO:0000250"/>
    <property type="project" value="UniProtKB"/>
</dbReference>
<dbReference type="GO" id="GO:0006487">
    <property type="term" value="P:protein N-linked glycosylation"/>
    <property type="evidence" value="ECO:0000250"/>
    <property type="project" value="UniProtKB"/>
</dbReference>
<dbReference type="CDD" id="cd03816">
    <property type="entry name" value="GT33_ALG1-like"/>
    <property type="match status" value="1"/>
</dbReference>
<dbReference type="FunFam" id="3.40.50.2000:FF:000096">
    <property type="entry name" value="ALG1, chitobiosyldiphosphodolichol beta-mannosyltransferase"/>
    <property type="match status" value="1"/>
</dbReference>
<dbReference type="Gene3D" id="3.40.50.2000">
    <property type="entry name" value="Glycogen Phosphorylase B"/>
    <property type="match status" value="1"/>
</dbReference>
<dbReference type="InterPro" id="IPR026051">
    <property type="entry name" value="ALG1-like"/>
</dbReference>
<dbReference type="PANTHER" id="PTHR13036">
    <property type="entry name" value="BETA1,4 MANNOSYLTRANSFERASE"/>
    <property type="match status" value="1"/>
</dbReference>
<dbReference type="PANTHER" id="PTHR13036:SF0">
    <property type="entry name" value="CHITOBIOSYLDIPHOSPHODOLICHOL BETA-MANNOSYLTRANSFERASE"/>
    <property type="match status" value="1"/>
</dbReference>
<dbReference type="Pfam" id="PF13692">
    <property type="entry name" value="Glyco_trans_1_4"/>
    <property type="match status" value="1"/>
</dbReference>
<dbReference type="SUPFAM" id="SSF53756">
    <property type="entry name" value="UDP-Glycosyltransferase/glycogen phosphorylase"/>
    <property type="match status" value="1"/>
</dbReference>
<proteinExistence type="evidence at protein level"/>
<protein>
    <recommendedName>
        <fullName evidence="5">Chitobiosyldiphosphodolichol beta-mannosyltransferase</fullName>
        <ecNumber evidence="2">2.4.1.142</ecNumber>
    </recommendedName>
    <alternativeName>
        <fullName>Asparagine-linked glycosylation protein 1 homolog</fullName>
    </alternativeName>
    <alternativeName>
        <fullName>Beta-1,4-mannosyltransferase</fullName>
    </alternativeName>
    <alternativeName>
        <fullName>GDP-Man:GlcNAc2-PP-dolichol mannosyltransferase</fullName>
    </alternativeName>
    <alternativeName>
        <fullName>GDP-mannose-dolichol diphosphochitobiose mannosyltransferase</fullName>
    </alternativeName>
</protein>
<gene>
    <name evidence="6" type="primary">Alg1</name>
</gene>
<reference key="1">
    <citation type="journal article" date="2005" name="Science">
        <title>The transcriptional landscape of the mammalian genome.</title>
        <authorList>
            <person name="Carninci P."/>
            <person name="Kasukawa T."/>
            <person name="Katayama S."/>
            <person name="Gough J."/>
            <person name="Frith M.C."/>
            <person name="Maeda N."/>
            <person name="Oyama R."/>
            <person name="Ravasi T."/>
            <person name="Lenhard B."/>
            <person name="Wells C."/>
            <person name="Kodzius R."/>
            <person name="Shimokawa K."/>
            <person name="Bajic V.B."/>
            <person name="Brenner S.E."/>
            <person name="Batalov S."/>
            <person name="Forrest A.R."/>
            <person name="Zavolan M."/>
            <person name="Davis M.J."/>
            <person name="Wilming L.G."/>
            <person name="Aidinis V."/>
            <person name="Allen J.E."/>
            <person name="Ambesi-Impiombato A."/>
            <person name="Apweiler R."/>
            <person name="Aturaliya R.N."/>
            <person name="Bailey T.L."/>
            <person name="Bansal M."/>
            <person name="Baxter L."/>
            <person name="Beisel K.W."/>
            <person name="Bersano T."/>
            <person name="Bono H."/>
            <person name="Chalk A.M."/>
            <person name="Chiu K.P."/>
            <person name="Choudhary V."/>
            <person name="Christoffels A."/>
            <person name="Clutterbuck D.R."/>
            <person name="Crowe M.L."/>
            <person name="Dalla E."/>
            <person name="Dalrymple B.P."/>
            <person name="de Bono B."/>
            <person name="Della Gatta G."/>
            <person name="di Bernardo D."/>
            <person name="Down T."/>
            <person name="Engstrom P."/>
            <person name="Fagiolini M."/>
            <person name="Faulkner G."/>
            <person name="Fletcher C.F."/>
            <person name="Fukushima T."/>
            <person name="Furuno M."/>
            <person name="Futaki S."/>
            <person name="Gariboldi M."/>
            <person name="Georgii-Hemming P."/>
            <person name="Gingeras T.R."/>
            <person name="Gojobori T."/>
            <person name="Green R.E."/>
            <person name="Gustincich S."/>
            <person name="Harbers M."/>
            <person name="Hayashi Y."/>
            <person name="Hensch T.K."/>
            <person name="Hirokawa N."/>
            <person name="Hill D."/>
            <person name="Huminiecki L."/>
            <person name="Iacono M."/>
            <person name="Ikeo K."/>
            <person name="Iwama A."/>
            <person name="Ishikawa T."/>
            <person name="Jakt M."/>
            <person name="Kanapin A."/>
            <person name="Katoh M."/>
            <person name="Kawasawa Y."/>
            <person name="Kelso J."/>
            <person name="Kitamura H."/>
            <person name="Kitano H."/>
            <person name="Kollias G."/>
            <person name="Krishnan S.P."/>
            <person name="Kruger A."/>
            <person name="Kummerfeld S.K."/>
            <person name="Kurochkin I.V."/>
            <person name="Lareau L.F."/>
            <person name="Lazarevic D."/>
            <person name="Lipovich L."/>
            <person name="Liu J."/>
            <person name="Liuni S."/>
            <person name="McWilliam S."/>
            <person name="Madan Babu M."/>
            <person name="Madera M."/>
            <person name="Marchionni L."/>
            <person name="Matsuda H."/>
            <person name="Matsuzawa S."/>
            <person name="Miki H."/>
            <person name="Mignone F."/>
            <person name="Miyake S."/>
            <person name="Morris K."/>
            <person name="Mottagui-Tabar S."/>
            <person name="Mulder N."/>
            <person name="Nakano N."/>
            <person name="Nakauchi H."/>
            <person name="Ng P."/>
            <person name="Nilsson R."/>
            <person name="Nishiguchi S."/>
            <person name="Nishikawa S."/>
            <person name="Nori F."/>
            <person name="Ohara O."/>
            <person name="Okazaki Y."/>
            <person name="Orlando V."/>
            <person name="Pang K.C."/>
            <person name="Pavan W.J."/>
            <person name="Pavesi G."/>
            <person name="Pesole G."/>
            <person name="Petrovsky N."/>
            <person name="Piazza S."/>
            <person name="Reed J."/>
            <person name="Reid J.F."/>
            <person name="Ring B.Z."/>
            <person name="Ringwald M."/>
            <person name="Rost B."/>
            <person name="Ruan Y."/>
            <person name="Salzberg S.L."/>
            <person name="Sandelin A."/>
            <person name="Schneider C."/>
            <person name="Schoenbach C."/>
            <person name="Sekiguchi K."/>
            <person name="Semple C.A."/>
            <person name="Seno S."/>
            <person name="Sessa L."/>
            <person name="Sheng Y."/>
            <person name="Shibata Y."/>
            <person name="Shimada H."/>
            <person name="Shimada K."/>
            <person name="Silva D."/>
            <person name="Sinclair B."/>
            <person name="Sperling S."/>
            <person name="Stupka E."/>
            <person name="Sugiura K."/>
            <person name="Sultana R."/>
            <person name="Takenaka Y."/>
            <person name="Taki K."/>
            <person name="Tammoja K."/>
            <person name="Tan S.L."/>
            <person name="Tang S."/>
            <person name="Taylor M.S."/>
            <person name="Tegner J."/>
            <person name="Teichmann S.A."/>
            <person name="Ueda H.R."/>
            <person name="van Nimwegen E."/>
            <person name="Verardo R."/>
            <person name="Wei C.L."/>
            <person name="Yagi K."/>
            <person name="Yamanishi H."/>
            <person name="Zabarovsky E."/>
            <person name="Zhu S."/>
            <person name="Zimmer A."/>
            <person name="Hide W."/>
            <person name="Bult C."/>
            <person name="Grimmond S.M."/>
            <person name="Teasdale R.D."/>
            <person name="Liu E.T."/>
            <person name="Brusic V."/>
            <person name="Quackenbush J."/>
            <person name="Wahlestedt C."/>
            <person name="Mattick J.S."/>
            <person name="Hume D.A."/>
            <person name="Kai C."/>
            <person name="Sasaki D."/>
            <person name="Tomaru Y."/>
            <person name="Fukuda S."/>
            <person name="Kanamori-Katayama M."/>
            <person name="Suzuki M."/>
            <person name="Aoki J."/>
            <person name="Arakawa T."/>
            <person name="Iida J."/>
            <person name="Imamura K."/>
            <person name="Itoh M."/>
            <person name="Kato T."/>
            <person name="Kawaji H."/>
            <person name="Kawagashira N."/>
            <person name="Kawashima T."/>
            <person name="Kojima M."/>
            <person name="Kondo S."/>
            <person name="Konno H."/>
            <person name="Nakano K."/>
            <person name="Ninomiya N."/>
            <person name="Nishio T."/>
            <person name="Okada M."/>
            <person name="Plessy C."/>
            <person name="Shibata K."/>
            <person name="Shiraki T."/>
            <person name="Suzuki S."/>
            <person name="Tagami M."/>
            <person name="Waki K."/>
            <person name="Watahiki A."/>
            <person name="Okamura-Oho Y."/>
            <person name="Suzuki H."/>
            <person name="Kawai J."/>
            <person name="Hayashizaki Y."/>
        </authorList>
    </citation>
    <scope>NUCLEOTIDE SEQUENCE [LARGE SCALE MRNA] (ISOFORM 1)</scope>
    <source>
        <strain>C57BL/6J</strain>
        <tissue>Placenta</tissue>
    </source>
</reference>
<reference key="2">
    <citation type="journal article" date="2004" name="Genome Res.">
        <title>The status, quality, and expansion of the NIH full-length cDNA project: the Mammalian Gene Collection (MGC).</title>
        <authorList>
            <consortium name="The MGC Project Team"/>
        </authorList>
    </citation>
    <scope>NUCLEOTIDE SEQUENCE [LARGE SCALE MRNA] (ISOFORM 2)</scope>
    <source>
        <strain>FVB/N</strain>
        <tissue>Mammary tumor</tissue>
    </source>
</reference>
<reference key="3">
    <citation type="journal article" date="2010" name="Cell">
        <title>A tissue-specific atlas of mouse protein phosphorylation and expression.</title>
        <authorList>
            <person name="Huttlin E.L."/>
            <person name="Jedrychowski M.P."/>
            <person name="Elias J.E."/>
            <person name="Goswami T."/>
            <person name="Rad R."/>
            <person name="Beausoleil S.A."/>
            <person name="Villen J."/>
            <person name="Haas W."/>
            <person name="Sowa M.E."/>
            <person name="Gygi S.P."/>
        </authorList>
    </citation>
    <scope>IDENTIFICATION BY MASS SPECTROMETRY [LARGE SCALE ANALYSIS]</scope>
    <source>
        <tissue>Testis</tissue>
    </source>
</reference>
<evidence type="ECO:0000250" key="1">
    <source>
        <dbReference type="UniProtKB" id="P16661"/>
    </source>
</evidence>
<evidence type="ECO:0000250" key="2">
    <source>
        <dbReference type="UniProtKB" id="Q9BT22"/>
    </source>
</evidence>
<evidence type="ECO:0000255" key="3"/>
<evidence type="ECO:0000303" key="4">
    <source>
    </source>
</evidence>
<evidence type="ECO:0000305" key="5"/>
<evidence type="ECO:0000312" key="6">
    <source>
        <dbReference type="MGI" id="MGI:2384774"/>
    </source>
</evidence>
<feature type="chain" id="PRO_0000080250" description="Chitobiosyldiphosphodolichol beta-mannosyltransferase">
    <location>
        <begin position="1"/>
        <end position="482"/>
    </location>
</feature>
<feature type="topological domain" description="Lumenal" evidence="1">
    <location>
        <begin position="1"/>
        <end position="2"/>
    </location>
</feature>
<feature type="transmembrane region" description="Helical" evidence="3">
    <location>
        <begin position="3"/>
        <end position="23"/>
    </location>
</feature>
<feature type="topological domain" description="Cytoplasmic" evidence="1">
    <location>
        <begin position="24"/>
        <end position="99"/>
    </location>
</feature>
<feature type="intramembrane region" description="Helical" evidence="3">
    <location>
        <begin position="100"/>
        <end position="120"/>
    </location>
</feature>
<feature type="topological domain" description="Cytoplasmic" evidence="1">
    <location>
        <begin position="121"/>
        <end position="482"/>
    </location>
</feature>
<feature type="modified residue" description="Phosphoserine" evidence="2">
    <location>
        <position position="242"/>
    </location>
</feature>
<feature type="splice variant" id="VSP_032516" description="In isoform 2." evidence="4">
    <original>NSKPRDELLQNDRIRIVKLTDLRGLGA</original>
    <variation>T</variation>
    <location>
        <begin position="70"/>
        <end position="96"/>
    </location>
</feature>
<feature type="sequence conflict" description="In Ref. 2; BC011281." evidence="5" ref="2">
    <original>QHV</original>
    <variation>RHI</variation>
    <location>
        <begin position="339"/>
        <end position="341"/>
    </location>
</feature>
<feature type="sequence conflict" description="In Ref. 2; BC011281." evidence="5" ref="2">
    <original>G</original>
    <variation>R</variation>
    <location>
        <position position="445"/>
    </location>
</feature>
<name>ALG1_MOUSE</name>